<protein>
    <recommendedName>
        <fullName>Anthranilate synthase component 1</fullName>
        <shortName>AS</shortName>
        <shortName>ASI</shortName>
        <ecNumber>4.1.3.27</ecNumber>
    </recommendedName>
</protein>
<accession>P20463</accession>
<dbReference type="EC" id="4.1.3.27"/>
<dbReference type="EMBL" id="M22468">
    <property type="protein sequence ID" value="AAA88216.1"/>
    <property type="molecule type" value="Genomic_DNA"/>
</dbReference>
<dbReference type="PIR" id="B32840">
    <property type="entry name" value="B32840"/>
</dbReference>
<dbReference type="SMR" id="P20463"/>
<dbReference type="UniPathway" id="UPA00035">
    <property type="reaction ID" value="UER00040"/>
</dbReference>
<dbReference type="GO" id="GO:0004049">
    <property type="term" value="F:anthranilate synthase activity"/>
    <property type="evidence" value="ECO:0007669"/>
    <property type="project" value="UniProtKB-EC"/>
</dbReference>
<dbReference type="GO" id="GO:0046872">
    <property type="term" value="F:metal ion binding"/>
    <property type="evidence" value="ECO:0007669"/>
    <property type="project" value="UniProtKB-KW"/>
</dbReference>
<dbReference type="GO" id="GO:0000162">
    <property type="term" value="P:L-tryptophan biosynthetic process"/>
    <property type="evidence" value="ECO:0007669"/>
    <property type="project" value="UniProtKB-UniPathway"/>
</dbReference>
<dbReference type="Gene3D" id="3.60.120.10">
    <property type="entry name" value="Anthranilate synthase"/>
    <property type="match status" value="1"/>
</dbReference>
<dbReference type="InterPro" id="IPR005801">
    <property type="entry name" value="ADC_synthase"/>
</dbReference>
<dbReference type="InterPro" id="IPR019999">
    <property type="entry name" value="Anth_synth_I-like"/>
</dbReference>
<dbReference type="InterPro" id="IPR006805">
    <property type="entry name" value="Anth_synth_I_N"/>
</dbReference>
<dbReference type="InterPro" id="IPR015890">
    <property type="entry name" value="Chorismate_C"/>
</dbReference>
<dbReference type="PANTHER" id="PTHR11236">
    <property type="entry name" value="AMINOBENZOATE/ANTHRANILATE SYNTHASE"/>
    <property type="match status" value="1"/>
</dbReference>
<dbReference type="PANTHER" id="PTHR11236:SF9">
    <property type="entry name" value="ANTHRANILATE SYNTHASE COMPONENT 1"/>
    <property type="match status" value="1"/>
</dbReference>
<dbReference type="Pfam" id="PF04715">
    <property type="entry name" value="Anth_synt_I_N"/>
    <property type="match status" value="1"/>
</dbReference>
<dbReference type="Pfam" id="PF00425">
    <property type="entry name" value="Chorismate_bind"/>
    <property type="match status" value="1"/>
</dbReference>
<dbReference type="PRINTS" id="PR00095">
    <property type="entry name" value="ANTSNTHASEI"/>
</dbReference>
<dbReference type="SUPFAM" id="SSF56322">
    <property type="entry name" value="ADC synthase"/>
    <property type="match status" value="1"/>
</dbReference>
<comment type="function">
    <text evidence="1">Part of a heterotetrameric complex that catalyzes the two-step biosynthesis of anthranilate, an intermediate in the biosynthesis of L-tryptophan. In the first step, the glutamine-binding beta subunit (TrpG) of anthranilate synthase (AS) provides the glutamine amidotransferase activity which generates ammonia as a substrate that, along with chorismate, is used in the second step, catalyzed by the large alpha subunit of AS (TrpE) to produce anthranilate. In the absence of TrpG, TrpE can synthesize anthranilate directly from chorismate and high concentrations of ammonia (By similarity).</text>
</comment>
<comment type="catalytic activity">
    <reaction>
        <text>chorismate + L-glutamine = anthranilate + pyruvate + L-glutamate + H(+)</text>
        <dbReference type="Rhea" id="RHEA:21732"/>
        <dbReference type="ChEBI" id="CHEBI:15361"/>
        <dbReference type="ChEBI" id="CHEBI:15378"/>
        <dbReference type="ChEBI" id="CHEBI:16567"/>
        <dbReference type="ChEBI" id="CHEBI:29748"/>
        <dbReference type="ChEBI" id="CHEBI:29985"/>
        <dbReference type="ChEBI" id="CHEBI:58359"/>
        <dbReference type="EC" id="4.1.3.27"/>
    </reaction>
</comment>
<comment type="cofactor">
    <cofactor evidence="2">
        <name>Mg(2+)</name>
        <dbReference type="ChEBI" id="CHEBI:18420"/>
    </cofactor>
    <text evidence="2">Binds 1 Mg(2+) ion per subunit.</text>
</comment>
<comment type="activity regulation">
    <text evidence="1">Feedback inhibited by tryptophan.</text>
</comment>
<comment type="pathway">
    <text>Amino-acid biosynthesis; L-tryptophan biosynthesis; L-tryptophan from chorismate: step 1/5.</text>
</comment>
<comment type="subunit">
    <text evidence="1">Heterotetramer consisting of two non-identical subunits: a beta subunit (TrpG) and a large alpha subunit (TrpE).</text>
</comment>
<comment type="similarity">
    <text evidence="3">Belongs to the anthranilate synthase component I family.</text>
</comment>
<feature type="chain" id="PRO_0000154097" description="Anthranilate synthase component 1">
    <location>
        <begin position="1"/>
        <end position="462"/>
    </location>
</feature>
<feature type="binding site" evidence="2">
    <location>
        <position position="46"/>
    </location>
    <ligand>
        <name>L-tryptophan</name>
        <dbReference type="ChEBI" id="CHEBI:57912"/>
    </ligand>
</feature>
<feature type="binding site" evidence="2">
    <location>
        <begin position="243"/>
        <end position="245"/>
    </location>
    <ligand>
        <name>L-tryptophan</name>
        <dbReference type="ChEBI" id="CHEBI:57912"/>
    </ligand>
</feature>
<feature type="binding site" evidence="2">
    <location>
        <begin position="278"/>
        <end position="279"/>
    </location>
    <ligand>
        <name>chorismate</name>
        <dbReference type="ChEBI" id="CHEBI:29748"/>
    </ligand>
</feature>
<feature type="binding site" evidence="2">
    <location>
        <position position="305"/>
    </location>
    <ligand>
        <name>Mg(2+)</name>
        <dbReference type="ChEBI" id="CHEBI:18420"/>
    </ligand>
</feature>
<feature type="binding site" evidence="2">
    <location>
        <position position="394"/>
    </location>
    <ligand>
        <name>chorismate</name>
        <dbReference type="ChEBI" id="CHEBI:29748"/>
    </ligand>
</feature>
<feature type="binding site" evidence="2">
    <location>
        <position position="414"/>
    </location>
    <ligand>
        <name>chorismate</name>
        <dbReference type="ChEBI" id="CHEBI:29748"/>
    </ligand>
</feature>
<feature type="binding site" evidence="2">
    <location>
        <begin position="428"/>
        <end position="430"/>
    </location>
    <ligand>
        <name>chorismate</name>
        <dbReference type="ChEBI" id="CHEBI:29748"/>
    </ligand>
</feature>
<feature type="binding site" evidence="2">
    <location>
        <position position="430"/>
    </location>
    <ligand>
        <name>chorismate</name>
        <dbReference type="ChEBI" id="CHEBI:29748"/>
    </ligand>
</feature>
<feature type="binding site" evidence="2">
    <location>
        <position position="444"/>
    </location>
    <ligand>
        <name>Mg(2+)</name>
        <dbReference type="ChEBI" id="CHEBI:18420"/>
    </ligand>
</feature>
<name>TRPE_LEPBI</name>
<gene>
    <name type="primary">trpE</name>
</gene>
<proteinExistence type="inferred from homology"/>
<sequence length="462" mass="51834">MSQTLPKIKIPKKPNYNSLALAEGIEFWELFRVIEAKYENCFLLESAGDNQYDSRYSVIGFQPSHLILGEPGILEIDGKKYPVENPYFALRELTDYNSLSISYAGGFVGYLGYQSMQFFEPKLQLKPHPDFPAMIFGLYLDGLIYDKFTGELIYFDNGTNRIHEVNQILEQLKKENSQKPKATVSLVKAGLSKEVHKQMVEEALEEVKAGNTFQCQIGFEEIYQVDGNPLAIYETLREINPSPHMYYVNLELVTILGASPSSLFRLRQGEMESFPLAGTTKRGVDAKEDTLLARKLLTDPKEIAEHNMLIDLHRNDVGRVAKFGTVKVRRRFDVKRFSHVQHISSEVVGILSSKEDMFSGLASSFPRGTLSGAPKIESDSKIIERIEKSPRGPYGGAVGSFGLNGDCTFAIPIRSFFVNGKKGFVRASGGIVFGFIEPEDEYQEIINKMASVRKALDLHKGP</sequence>
<reference key="1">
    <citation type="journal article" date="1989" name="J. Bacteriol.">
        <title>Identification and nucleotide sequence of the Leptospira biflexa serovar patoc trpE and trpG genes.</title>
        <authorList>
            <person name="Yelton D.B."/>
            <person name="Peng S.L."/>
        </authorList>
    </citation>
    <scope>NUCLEOTIDE SEQUENCE [GENOMIC DNA]</scope>
    <source>
        <strain>Serovar Patoc</strain>
    </source>
</reference>
<organism>
    <name type="scientific">Leptospira biflexa</name>
    <dbReference type="NCBI Taxonomy" id="172"/>
    <lineage>
        <taxon>Bacteria</taxon>
        <taxon>Pseudomonadati</taxon>
        <taxon>Spirochaetota</taxon>
        <taxon>Spirochaetia</taxon>
        <taxon>Leptospirales</taxon>
        <taxon>Leptospiraceae</taxon>
        <taxon>Leptospira</taxon>
    </lineage>
</organism>
<keyword id="KW-0028">Amino-acid biosynthesis</keyword>
<keyword id="KW-0057">Aromatic amino acid biosynthesis</keyword>
<keyword id="KW-0456">Lyase</keyword>
<keyword id="KW-0460">Magnesium</keyword>
<keyword id="KW-0479">Metal-binding</keyword>
<keyword id="KW-0822">Tryptophan biosynthesis</keyword>
<evidence type="ECO:0000250" key="1"/>
<evidence type="ECO:0000250" key="2">
    <source>
        <dbReference type="UniProtKB" id="P00897"/>
    </source>
</evidence>
<evidence type="ECO:0000305" key="3"/>